<evidence type="ECO:0000250" key="1"/>
<evidence type="ECO:0000250" key="2">
    <source>
        <dbReference type="UniProtKB" id="Q02241"/>
    </source>
</evidence>
<evidence type="ECO:0000255" key="3"/>
<evidence type="ECO:0000255" key="4">
    <source>
        <dbReference type="PROSITE-ProRule" id="PRU00283"/>
    </source>
</evidence>
<evidence type="ECO:0000256" key="5">
    <source>
        <dbReference type="SAM" id="MobiDB-lite"/>
    </source>
</evidence>
<evidence type="ECO:0000269" key="6">
    <source>
    </source>
</evidence>
<evidence type="ECO:0000269" key="7">
    <source>
    </source>
</evidence>
<evidence type="ECO:0000269" key="8">
    <source>
    </source>
</evidence>
<evidence type="ECO:0000305" key="9"/>
<evidence type="ECO:0007744" key="10">
    <source>
    </source>
</evidence>
<evidence type="ECO:0007744" key="11">
    <source>
    </source>
</evidence>
<feature type="chain" id="PRO_0000425085" description="Kinesin-like protein KIF23">
    <location>
        <begin position="1"/>
        <end position="953"/>
    </location>
</feature>
<feature type="domain" description="Kinesin motor" evidence="4">
    <location>
        <begin position="25"/>
        <end position="436"/>
    </location>
</feature>
<feature type="region of interest" description="Disordered" evidence="5">
    <location>
        <begin position="658"/>
        <end position="695"/>
    </location>
</feature>
<feature type="region of interest" description="Disordered" evidence="5">
    <location>
        <begin position="894"/>
        <end position="921"/>
    </location>
</feature>
<feature type="region of interest" description="Disordered" evidence="5">
    <location>
        <begin position="934"/>
        <end position="953"/>
    </location>
</feature>
<feature type="coiled-coil region" evidence="3">
    <location>
        <begin position="542"/>
        <end position="618"/>
    </location>
</feature>
<feature type="short sequence motif" description="Nuclear localization signal" evidence="3">
    <location>
        <begin position="7"/>
        <end position="11"/>
    </location>
</feature>
<feature type="compositionally biased region" description="Basic and acidic residues" evidence="5">
    <location>
        <begin position="662"/>
        <end position="680"/>
    </location>
</feature>
<feature type="compositionally biased region" description="Low complexity" evidence="5">
    <location>
        <begin position="681"/>
        <end position="693"/>
    </location>
</feature>
<feature type="binding site" evidence="4">
    <location>
        <begin position="112"/>
        <end position="119"/>
    </location>
    <ligand>
        <name>ATP</name>
        <dbReference type="ChEBI" id="CHEBI:30616"/>
    </ligand>
</feature>
<feature type="modified residue" description="Phosphoserine" evidence="2">
    <location>
        <position position="155"/>
    </location>
</feature>
<feature type="modified residue" description="Phosphoserine" evidence="11">
    <location>
        <position position="160"/>
    </location>
</feature>
<feature type="modified residue" description="Phosphoserine" evidence="2">
    <location>
        <position position="606"/>
    </location>
</feature>
<feature type="modified residue" description="Phosphoserine" evidence="11">
    <location>
        <position position="683"/>
    </location>
</feature>
<feature type="modified residue" description="Phosphoserine" evidence="11">
    <location>
        <position position="685"/>
    </location>
</feature>
<feature type="modified residue" description="Phosphothreonine" evidence="2">
    <location>
        <position position="739"/>
    </location>
</feature>
<feature type="modified residue" description="Phosphoserine" evidence="2">
    <location>
        <position position="807"/>
    </location>
</feature>
<feature type="modified residue" description="Phosphoserine" evidence="10 11">
    <location>
        <position position="860"/>
    </location>
</feature>
<feature type="modified residue" description="Phosphoserine" evidence="2">
    <location>
        <position position="904"/>
    </location>
</feature>
<feature type="modified residue" description="Phosphothreonine" evidence="11">
    <location>
        <position position="920"/>
    </location>
</feature>
<feature type="cross-link" description="Glycyl lysine isopeptide (Lys-Gly) (interchain with G-Cter in SUMO2)" evidence="2">
    <location>
        <position position="572"/>
    </location>
</feature>
<feature type="cross-link" description="Glycyl lysine isopeptide (Lys-Gly) (interchain with G-Cter in SUMO2)" evidence="2">
    <location>
        <position position="587"/>
    </location>
</feature>
<feature type="cross-link" description="Glycyl lysine isopeptide (Lys-Gly) (interchain with G-Cter in SUMO2)" evidence="2">
    <location>
        <position position="625"/>
    </location>
</feature>
<feature type="cross-link" description="Glycyl lysine isopeptide (Lys-Gly) (interchain with G-Cter in SUMO2)" evidence="2">
    <location>
        <position position="648"/>
    </location>
</feature>
<feature type="cross-link" description="Glycyl lysine isopeptide (Lys-Gly) (interchain with G-Cter in SUMO2)" evidence="2">
    <location>
        <position position="663"/>
    </location>
</feature>
<feature type="cross-link" description="Glycyl lysine isopeptide (Lys-Gly) (interchain with G-Cter in SUMO2)" evidence="2">
    <location>
        <position position="666"/>
    </location>
</feature>
<feature type="cross-link" description="Glycyl lysine isopeptide (Lys-Gly) (interchain with G-Cter in SUMO2)" evidence="2">
    <location>
        <position position="816"/>
    </location>
</feature>
<feature type="cross-link" description="Glycyl lysine isopeptide (Lys-Gly) (interchain with G-Cter in SUMO2)" evidence="2">
    <location>
        <position position="847"/>
    </location>
</feature>
<feature type="cross-link" description="Glycyl lysine isopeptide (Lys-Gly) (interchain with G-Cter in SUMO2)" evidence="2">
    <location>
        <position position="867"/>
    </location>
</feature>
<feature type="cross-link" description="Glycyl lysine isopeptide (Lys-Gly) (interchain with G-Cter in SUMO2)" evidence="2">
    <location>
        <position position="870"/>
    </location>
</feature>
<feature type="cross-link" description="Glycyl lysine isopeptide (Lys-Gly) (interchain with G-Cter in SUMO2)" evidence="2">
    <location>
        <position position="892"/>
    </location>
</feature>
<feature type="cross-link" description="Glycyl lysine isopeptide (Lys-Gly) (interchain with G-Cter in SUMO2)" evidence="2">
    <location>
        <position position="949"/>
    </location>
</feature>
<feature type="sequence conflict" description="In Ref. 2; AAH47273." evidence="9" ref="2">
    <original>V</original>
    <variation>I</variation>
    <location>
        <position position="464"/>
    </location>
</feature>
<name>KIF23_MOUSE</name>
<reference key="1">
    <citation type="journal article" date="2009" name="PLoS Biol.">
        <title>Lineage-specific biology revealed by a finished genome assembly of the mouse.</title>
        <authorList>
            <person name="Church D.M."/>
            <person name="Goodstadt L."/>
            <person name="Hillier L.W."/>
            <person name="Zody M.C."/>
            <person name="Goldstein S."/>
            <person name="She X."/>
            <person name="Bult C.J."/>
            <person name="Agarwala R."/>
            <person name="Cherry J.L."/>
            <person name="DiCuccio M."/>
            <person name="Hlavina W."/>
            <person name="Kapustin Y."/>
            <person name="Meric P."/>
            <person name="Maglott D."/>
            <person name="Birtle Z."/>
            <person name="Marques A.C."/>
            <person name="Graves T."/>
            <person name="Zhou S."/>
            <person name="Teague B."/>
            <person name="Potamousis K."/>
            <person name="Churas C."/>
            <person name="Place M."/>
            <person name="Herschleb J."/>
            <person name="Runnheim R."/>
            <person name="Forrest D."/>
            <person name="Amos-Landgraf J."/>
            <person name="Schwartz D.C."/>
            <person name="Cheng Z."/>
            <person name="Lindblad-Toh K."/>
            <person name="Eichler E.E."/>
            <person name="Ponting C.P."/>
        </authorList>
    </citation>
    <scope>NUCLEOTIDE SEQUENCE [LARGE SCALE GENOMIC DNA]</scope>
    <source>
        <strain>C57BL/6J</strain>
    </source>
</reference>
<reference key="2">
    <citation type="journal article" date="2004" name="Genome Res.">
        <title>The status, quality, and expansion of the NIH full-length cDNA project: the Mammalian Gene Collection (MGC).</title>
        <authorList>
            <consortium name="The MGC Project Team"/>
        </authorList>
    </citation>
    <scope>NUCLEOTIDE SEQUENCE [LARGE SCALE MRNA]</scope>
    <source>
        <strain>FVB/N-3</strain>
        <tissue>Mammary tumor</tissue>
    </source>
</reference>
<reference key="3">
    <citation type="journal article" date="2001" name="Proc. Natl. Acad. Sci. U.S.A.">
        <title>All kinesin superfamily protein, KIF, genes in mouse and human.</title>
        <authorList>
            <person name="Miki H."/>
            <person name="Setou M."/>
            <person name="Kaneshiro K."/>
        </authorList>
    </citation>
    <scope>NUCLEOTIDE SEQUENCE [GENOMIC DNA] OF 203-340</scope>
    <scope>TISSUE SPECIFICITY</scope>
</reference>
<reference key="4">
    <citation type="journal article" date="2009" name="Biol. Reprod.">
        <title>Mouse TEX14 is required for embryonic germ cell intercellular bridges but not female fertility.</title>
        <authorList>
            <person name="Greenbaum M.P."/>
            <person name="Iwamori N."/>
            <person name="Agno J.E."/>
            <person name="Matzuk M.M."/>
        </authorList>
    </citation>
    <scope>SUBCELLULAR LOCATION</scope>
    <scope>TISSUE SPECIFICITY</scope>
</reference>
<reference key="5">
    <citation type="journal article" date="2009" name="Immunity">
        <title>The phagosomal proteome in interferon-gamma-activated macrophages.</title>
        <authorList>
            <person name="Trost M."/>
            <person name="English L."/>
            <person name="Lemieux S."/>
            <person name="Courcelles M."/>
            <person name="Desjardins M."/>
            <person name="Thibault P."/>
        </authorList>
    </citation>
    <scope>PHOSPHORYLATION [LARGE SCALE ANALYSIS] AT SER-860</scope>
    <scope>IDENTIFICATION BY MASS SPECTROMETRY [LARGE SCALE ANALYSIS]</scope>
</reference>
<reference key="6">
    <citation type="journal article" date="2010" name="Cell">
        <title>A tissue-specific atlas of mouse protein phosphorylation and expression.</title>
        <authorList>
            <person name="Huttlin E.L."/>
            <person name="Jedrychowski M.P."/>
            <person name="Elias J.E."/>
            <person name="Goswami T."/>
            <person name="Rad R."/>
            <person name="Beausoleil S.A."/>
            <person name="Villen J."/>
            <person name="Haas W."/>
            <person name="Sowa M.E."/>
            <person name="Gygi S.P."/>
        </authorList>
    </citation>
    <scope>PHOSPHORYLATION [LARGE SCALE ANALYSIS] AT SER-160; SER-683; SER-685; SER-860 AND THR-920</scope>
    <scope>IDENTIFICATION BY MASS SPECTROMETRY [LARGE SCALE ANALYSIS]</scope>
    <source>
        <tissue>Kidney</tissue>
        <tissue>Lung</tissue>
        <tissue>Spleen</tissue>
        <tissue>Testis</tissue>
    </source>
</reference>
<reference key="7">
    <citation type="journal article" date="2012" name="EMBO J.">
        <title>Structural basis for Arf6-MKLP1 complex formation on the Flemming body responsible for cytokinesis.</title>
        <authorList>
            <person name="Makyio H."/>
            <person name="Ohgi M."/>
            <person name="Takei T."/>
            <person name="Takahashi S."/>
            <person name="Takatsu H."/>
            <person name="Katoh Y."/>
            <person name="Hanai A."/>
            <person name="Ueda T."/>
            <person name="Kanaho Y."/>
            <person name="Xie Y."/>
            <person name="Shin H.W."/>
            <person name="Kamikubo H."/>
            <person name="Kataoka M."/>
            <person name="Kawasaki M."/>
            <person name="Kato R."/>
            <person name="Wakatsuki S."/>
            <person name="Nakayama K."/>
        </authorList>
    </citation>
    <scope>INTERACTION WITH ARF6</scope>
</reference>
<protein>
    <recommendedName>
        <fullName>Kinesin-like protein KIF23</fullName>
    </recommendedName>
</protein>
<dbReference type="EMBL" id="AC151969">
    <property type="status" value="NOT_ANNOTATED_CDS"/>
    <property type="molecule type" value="Genomic_DNA"/>
</dbReference>
<dbReference type="EMBL" id="BC047273">
    <property type="protein sequence ID" value="AAH47273.1"/>
    <property type="molecule type" value="mRNA"/>
</dbReference>
<dbReference type="EMBL" id="AB054027">
    <property type="protein sequence ID" value="BAB32491.1"/>
    <property type="molecule type" value="Genomic_DNA"/>
</dbReference>
<dbReference type="CCDS" id="CCDS40662.1"/>
<dbReference type="RefSeq" id="NP_077207.3">
    <property type="nucleotide sequence ID" value="NM_024245.4"/>
</dbReference>
<dbReference type="SMR" id="E9Q5G3"/>
<dbReference type="BioGRID" id="214951">
    <property type="interactions" value="33"/>
</dbReference>
<dbReference type="FunCoup" id="E9Q5G3">
    <property type="interactions" value="1781"/>
</dbReference>
<dbReference type="IntAct" id="E9Q5G3">
    <property type="interactions" value="16"/>
</dbReference>
<dbReference type="MINT" id="E9Q5G3"/>
<dbReference type="STRING" id="10090.ENSMUSP00000034815"/>
<dbReference type="GlyGen" id="E9Q5G3">
    <property type="glycosylation" value="1 site, 1 O-linked glycan (1 site)"/>
</dbReference>
<dbReference type="iPTMnet" id="E9Q5G3"/>
<dbReference type="PhosphoSitePlus" id="E9Q5G3"/>
<dbReference type="jPOST" id="E9Q5G3"/>
<dbReference type="PaxDb" id="10090-ENSMUSP00000034815"/>
<dbReference type="PeptideAtlas" id="E9Q5G3"/>
<dbReference type="ProteomicsDB" id="263530"/>
<dbReference type="Pumba" id="E9Q5G3"/>
<dbReference type="Antibodypedia" id="4171">
    <property type="antibodies" value="188 antibodies from 29 providers"/>
</dbReference>
<dbReference type="DNASU" id="71819"/>
<dbReference type="Ensembl" id="ENSMUST00000034815.9">
    <property type="protein sequence ID" value="ENSMUSP00000034815.8"/>
    <property type="gene ID" value="ENSMUSG00000032254.11"/>
</dbReference>
<dbReference type="GeneID" id="71819"/>
<dbReference type="KEGG" id="mmu:71819"/>
<dbReference type="UCSC" id="uc009pzu.2">
    <property type="organism name" value="mouse"/>
</dbReference>
<dbReference type="AGR" id="MGI:1919069"/>
<dbReference type="CTD" id="9493"/>
<dbReference type="MGI" id="MGI:1919069">
    <property type="gene designation" value="Kif23"/>
</dbReference>
<dbReference type="VEuPathDB" id="HostDB:ENSMUSG00000032254"/>
<dbReference type="eggNOG" id="KOG0247">
    <property type="taxonomic scope" value="Eukaryota"/>
</dbReference>
<dbReference type="GeneTree" id="ENSGT00940000155837"/>
<dbReference type="HOGENOM" id="CLU_001485_13_0_1"/>
<dbReference type="InParanoid" id="E9Q5G3"/>
<dbReference type="OMA" id="INPRIED"/>
<dbReference type="OrthoDB" id="123929at2759"/>
<dbReference type="PhylomeDB" id="E9Q5G3"/>
<dbReference type="TreeFam" id="TF105232"/>
<dbReference type="Reactome" id="R-MMU-2132295">
    <property type="pathway name" value="MHC class II antigen presentation"/>
</dbReference>
<dbReference type="Reactome" id="R-MMU-6811434">
    <property type="pathway name" value="COPI-dependent Golgi-to-ER retrograde traffic"/>
</dbReference>
<dbReference type="Reactome" id="R-MMU-68884">
    <property type="pathway name" value="Mitotic Telophase/Cytokinesis"/>
</dbReference>
<dbReference type="Reactome" id="R-MMU-983189">
    <property type="pathway name" value="Kinesins"/>
</dbReference>
<dbReference type="BioGRID-ORCS" id="71819">
    <property type="hits" value="23 hits in 81 CRISPR screens"/>
</dbReference>
<dbReference type="ChiTaRS" id="Kif23">
    <property type="organism name" value="mouse"/>
</dbReference>
<dbReference type="PRO" id="PR:E9Q5G3"/>
<dbReference type="Proteomes" id="UP000000589">
    <property type="component" value="Chromosome 9"/>
</dbReference>
<dbReference type="RNAct" id="E9Q5G3">
    <property type="molecule type" value="protein"/>
</dbReference>
<dbReference type="Bgee" id="ENSMUSG00000032254">
    <property type="expression patterns" value="Expressed in animal zygote and 207 other cell types or tissues"/>
</dbReference>
<dbReference type="ExpressionAtlas" id="E9Q5G3">
    <property type="expression patterns" value="baseline and differential"/>
</dbReference>
<dbReference type="GO" id="GO:0005813">
    <property type="term" value="C:centrosome"/>
    <property type="evidence" value="ECO:0000266"/>
    <property type="project" value="MGI"/>
</dbReference>
<dbReference type="GO" id="GO:0005737">
    <property type="term" value="C:cytoplasm"/>
    <property type="evidence" value="ECO:0007669"/>
    <property type="project" value="UniProtKB-KW"/>
</dbReference>
<dbReference type="GO" id="GO:0090543">
    <property type="term" value="C:Flemming body"/>
    <property type="evidence" value="ECO:0007669"/>
    <property type="project" value="UniProtKB-SubCell"/>
</dbReference>
<dbReference type="GO" id="GO:0045171">
    <property type="term" value="C:intercellular bridge"/>
    <property type="evidence" value="ECO:0000314"/>
    <property type="project" value="MGI"/>
</dbReference>
<dbReference type="GO" id="GO:0005874">
    <property type="term" value="C:microtubule"/>
    <property type="evidence" value="ECO:0007669"/>
    <property type="project" value="UniProtKB-KW"/>
</dbReference>
<dbReference type="GO" id="GO:0030496">
    <property type="term" value="C:midbody"/>
    <property type="evidence" value="ECO:0000250"/>
    <property type="project" value="UniProtKB"/>
</dbReference>
<dbReference type="GO" id="GO:0072686">
    <property type="term" value="C:mitotic spindle"/>
    <property type="evidence" value="ECO:0007669"/>
    <property type="project" value="Ensembl"/>
</dbReference>
<dbReference type="GO" id="GO:0005654">
    <property type="term" value="C:nucleoplasm"/>
    <property type="evidence" value="ECO:0007669"/>
    <property type="project" value="Ensembl"/>
</dbReference>
<dbReference type="GO" id="GO:0005524">
    <property type="term" value="F:ATP binding"/>
    <property type="evidence" value="ECO:0007669"/>
    <property type="project" value="UniProtKB-KW"/>
</dbReference>
<dbReference type="GO" id="GO:0008017">
    <property type="term" value="F:microtubule binding"/>
    <property type="evidence" value="ECO:0007669"/>
    <property type="project" value="InterPro"/>
</dbReference>
<dbReference type="GO" id="GO:0003777">
    <property type="term" value="F:microtubule motor activity"/>
    <property type="evidence" value="ECO:0007669"/>
    <property type="project" value="InterPro"/>
</dbReference>
<dbReference type="GO" id="GO:0007018">
    <property type="term" value="P:microtubule-based movement"/>
    <property type="evidence" value="ECO:0007669"/>
    <property type="project" value="InterPro"/>
</dbReference>
<dbReference type="GO" id="GO:0000281">
    <property type="term" value="P:mitotic cytokinesis"/>
    <property type="evidence" value="ECO:0000250"/>
    <property type="project" value="UniProtKB"/>
</dbReference>
<dbReference type="CDD" id="cd01368">
    <property type="entry name" value="KISc_KIF23_like"/>
    <property type="match status" value="1"/>
</dbReference>
<dbReference type="FunFam" id="2.60.40.4330:FF:000001">
    <property type="entry name" value="Kinesin-like protein"/>
    <property type="match status" value="1"/>
</dbReference>
<dbReference type="Gene3D" id="3.40.850.10">
    <property type="entry name" value="Kinesin motor domain"/>
    <property type="match status" value="1"/>
</dbReference>
<dbReference type="Gene3D" id="2.60.40.4330">
    <property type="entry name" value="Kinesin-like protein Kif23, Arf6-interacting domain"/>
    <property type="match status" value="1"/>
</dbReference>
<dbReference type="InterPro" id="IPR032384">
    <property type="entry name" value="Kif23_Arf-bd"/>
</dbReference>
<dbReference type="InterPro" id="IPR038105">
    <property type="entry name" value="Kif23_Arf-bd_sf"/>
</dbReference>
<dbReference type="InterPro" id="IPR027640">
    <property type="entry name" value="Kinesin-like_fam"/>
</dbReference>
<dbReference type="InterPro" id="IPR019821">
    <property type="entry name" value="Kinesin_motor_CS"/>
</dbReference>
<dbReference type="InterPro" id="IPR001752">
    <property type="entry name" value="Kinesin_motor_dom"/>
</dbReference>
<dbReference type="InterPro" id="IPR036961">
    <property type="entry name" value="Kinesin_motor_dom_sf"/>
</dbReference>
<dbReference type="InterPro" id="IPR027417">
    <property type="entry name" value="P-loop_NTPase"/>
</dbReference>
<dbReference type="PANTHER" id="PTHR24115:SF600">
    <property type="entry name" value="KINESIN-LIKE PROTEIN KIF23"/>
    <property type="match status" value="1"/>
</dbReference>
<dbReference type="PANTHER" id="PTHR24115">
    <property type="entry name" value="KINESIN-RELATED"/>
    <property type="match status" value="1"/>
</dbReference>
<dbReference type="Pfam" id="PF00225">
    <property type="entry name" value="Kinesin"/>
    <property type="match status" value="1"/>
</dbReference>
<dbReference type="Pfam" id="PF16540">
    <property type="entry name" value="MKLP1_Arf_bdg"/>
    <property type="match status" value="1"/>
</dbReference>
<dbReference type="PRINTS" id="PR00380">
    <property type="entry name" value="KINESINHEAVY"/>
</dbReference>
<dbReference type="SMART" id="SM00129">
    <property type="entry name" value="KISc"/>
    <property type="match status" value="1"/>
</dbReference>
<dbReference type="SUPFAM" id="SSF52540">
    <property type="entry name" value="P-loop containing nucleoside triphosphate hydrolases"/>
    <property type="match status" value="1"/>
</dbReference>
<dbReference type="PROSITE" id="PS00411">
    <property type="entry name" value="KINESIN_MOTOR_1"/>
    <property type="match status" value="1"/>
</dbReference>
<dbReference type="PROSITE" id="PS50067">
    <property type="entry name" value="KINESIN_MOTOR_2"/>
    <property type="match status" value="1"/>
</dbReference>
<keyword id="KW-0067">ATP-binding</keyword>
<keyword id="KW-0131">Cell cycle</keyword>
<keyword id="KW-0132">Cell division</keyword>
<keyword id="KW-0175">Coiled coil</keyword>
<keyword id="KW-0963">Cytoplasm</keyword>
<keyword id="KW-0206">Cytoskeleton</keyword>
<keyword id="KW-1017">Isopeptide bond</keyword>
<keyword id="KW-0493">Microtubule</keyword>
<keyword id="KW-0498">Mitosis</keyword>
<keyword id="KW-0505">Motor protein</keyword>
<keyword id="KW-0547">Nucleotide-binding</keyword>
<keyword id="KW-0539">Nucleus</keyword>
<keyword id="KW-0597">Phosphoprotein</keyword>
<keyword id="KW-1185">Reference proteome</keyword>
<keyword id="KW-0832">Ubl conjugation</keyword>
<comment type="function">
    <text evidence="1">Component of the centralspindlin complex that serves as a microtubule-dependent and Rho-mediated signaling required for the myosin contractile ring formation during the cell cycle cytokinesis. Essential for cytokinesis in Rho-mediated signaling. Required for the localization of ECT2 to the central spindle. Plus-end-directed motor enzyme that moves antiparallel microtubules in vitro (By similarity).</text>
</comment>
<comment type="subunit">
    <text evidence="1 8">Heterotetramer of two molecules each of RACGAP1 and KIF23. Found in the centralspindlin complex. Interacts with RACGAP1; the interaction is direct. Interacts with ECT2 and PRC1. Interacts with ANXA11 during cytokinesis. Interacts with BIRC6/bruce and USP8/UBPY (By similarity). Interacts with ARF6, forming heterodimers and heterotetramers.</text>
</comment>
<comment type="subcellular location">
    <subcellularLocation>
        <location evidence="1">Nucleus</location>
    </subcellularLocation>
    <subcellularLocation>
        <location evidence="1">Cytoplasm</location>
        <location evidence="1">Cytoskeleton</location>
        <location evidence="1">Spindle</location>
    </subcellularLocation>
    <subcellularLocation>
        <location evidence="7">Midbody</location>
        <location evidence="7">Midbody ring</location>
    </subcellularLocation>
    <text evidence="1">Localizes to the interzone of mitotic spindles (By similarity). Detected at the midbody during later stages of mitotic cytokinesis.</text>
</comment>
<comment type="tissue specificity">
    <text evidence="6 7">Detected in testis and ovary from newborn mice (at protein level). Detected in brain, spinal cord and small intestine.</text>
</comment>
<comment type="PTM">
    <text evidence="1">Ubiquitinated. Deubiquitinated by USP8/UBPY (By similarity).</text>
</comment>
<comment type="similarity">
    <text evidence="4">Belongs to the TRAFAC class myosin-kinesin ATPase superfamily. Kinesin family.</text>
</comment>
<accession>E9Q5G3</accession>
<accession>Q80V30</accession>
<accession>Q99PT8</accession>
<organism>
    <name type="scientific">Mus musculus</name>
    <name type="common">Mouse</name>
    <dbReference type="NCBI Taxonomy" id="10090"/>
    <lineage>
        <taxon>Eukaryota</taxon>
        <taxon>Metazoa</taxon>
        <taxon>Chordata</taxon>
        <taxon>Craniata</taxon>
        <taxon>Vertebrata</taxon>
        <taxon>Euteleostomi</taxon>
        <taxon>Mammalia</taxon>
        <taxon>Eutheria</taxon>
        <taxon>Euarchontoglires</taxon>
        <taxon>Glires</taxon>
        <taxon>Rodentia</taxon>
        <taxon>Myomorpha</taxon>
        <taxon>Muroidea</taxon>
        <taxon>Muridae</taxon>
        <taxon>Murinae</taxon>
        <taxon>Mus</taxon>
        <taxon>Mus</taxon>
    </lineage>
</organism>
<gene>
    <name type="primary">Kif23</name>
</gene>
<sequence>MKSAKAKTVRKPVIKKGSQTNLKDPVGVYCRVRPLSFPDQECCVEVINSTTLQLHTPEGYRLNRNGDYKETQYSFKRVFGTHTTQKELFDVVANPLVDDLIHGKNGLLFTYGVTGSGKTYTMTGSPGSGGLLPRCLNMIFNSIGSFQAKRYVFKSNDRNSMEIQCEVDALLERQKREALPIPKTPSSKRQADPEFADMINVQEFCKAEEVDEDSVYGVFVSYIEIYNNYIYDLLEEVQFDPIKPKLPQSKTLREDKNHNMYVAGCTEVEVKSTEEAFEVFWRGQKKRRIANTHLNRESSRSHSVFSIKLVQAPLDADGDNVLQEKEQITISQLSLVDLAGSERTNRTKAEGNRLREAGNINQSLMTLRTCMEVLRENQTYGTNKMVPYRDSKLTHLFKNYFDGEGKVRMIVCVNPKAEDYEESLQVMRFAEVTQEVEVARPVDKVICGLTPGRRYRNLPRGGPVGDEPLVPEVILQSFPPLPPCKLLDINDEETLPKLADTLEKRHHLRQLMTEDLNKKCLAFKALLKEFDNSLSNKENYVQEKLNEREKVISGQKLEIERLEKKNKTLEYKIEILEKTTTIYEEDKRNLQQELESQNQKLQRQFSDKRRLEARLQGMVTETSMKWQKECERRVAATQLEMQNKLWVKDEKLKQLKAIVTEPKPEKPERPSRERDREKIIPRSVSPSPLPLSSNNIAQISNGQQLMSQPQLHRRSNSCSSISVASCISEWEQKLSPFSTPVNVTSLARHRQQEPGQSKTCIVSDRRRGMCWTEGREMVPTFSSEIGVEEDHCRRNTPIPVRHRRSRSAGSRWVDHKPASNVQTETVMQPHVPHAITVSVANEKALAKCEKYMLTHQELASDGEIQTKVIKGDVYKTRGGGQSVQFTDIETLKQELPTGSRKRRSSTLAPAQPDGTESEWTDVETRCSVAVEMRAGSQLGPGYQHHAQPKRKKP</sequence>
<proteinExistence type="evidence at protein level"/>